<name>SGSM3_MOUSE</name>
<dbReference type="EMBL" id="AY382616">
    <property type="protein sequence ID" value="AAR89983.1"/>
    <property type="molecule type" value="mRNA"/>
</dbReference>
<dbReference type="EMBL" id="AK170806">
    <property type="protein sequence ID" value="BAE42041.1"/>
    <property type="status" value="ALT_INIT"/>
    <property type="molecule type" value="mRNA"/>
</dbReference>
<dbReference type="EMBL" id="BC018197">
    <property type="protein sequence ID" value="AAH18197.1"/>
    <property type="molecule type" value="mRNA"/>
</dbReference>
<dbReference type="EMBL" id="BC024122">
    <property type="protein sequence ID" value="AAH24122.1"/>
    <property type="molecule type" value="mRNA"/>
</dbReference>
<dbReference type="EMBL" id="BC025561">
    <property type="protein sequence ID" value="AAH25561.1"/>
    <property type="molecule type" value="mRNA"/>
</dbReference>
<dbReference type="CCDS" id="CCDS49673.2"/>
<dbReference type="RefSeq" id="NP_598852.3">
    <property type="nucleotide sequence ID" value="NM_134091.2"/>
</dbReference>
<dbReference type="PDB" id="2YUO">
    <property type="method" value="NMR"/>
    <property type="chains" value="A=483-547"/>
</dbReference>
<dbReference type="PDBsum" id="2YUO"/>
<dbReference type="BMRB" id="Q8VCZ6"/>
<dbReference type="SMR" id="Q8VCZ6"/>
<dbReference type="BioGRID" id="222930">
    <property type="interactions" value="1"/>
</dbReference>
<dbReference type="FunCoup" id="Q8VCZ6">
    <property type="interactions" value="373"/>
</dbReference>
<dbReference type="IntAct" id="Q8VCZ6">
    <property type="interactions" value="1"/>
</dbReference>
<dbReference type="STRING" id="10090.ENSMUSP00000122543"/>
<dbReference type="GlyGen" id="Q8VCZ6">
    <property type="glycosylation" value="1 site, 1 N-linked glycan (1 site)"/>
</dbReference>
<dbReference type="iPTMnet" id="Q8VCZ6"/>
<dbReference type="PhosphoSitePlus" id="Q8VCZ6"/>
<dbReference type="jPOST" id="Q8VCZ6"/>
<dbReference type="PaxDb" id="10090-ENSMUSP00000043311"/>
<dbReference type="ProteomicsDB" id="261015"/>
<dbReference type="Pumba" id="Q8VCZ6"/>
<dbReference type="Antibodypedia" id="45865">
    <property type="antibodies" value="119 antibodies from 29 providers"/>
</dbReference>
<dbReference type="DNASU" id="105835"/>
<dbReference type="Ensembl" id="ENSMUST00000139517.9">
    <property type="protein sequence ID" value="ENSMUSP00000122543.2"/>
    <property type="gene ID" value="ENSMUSG00000042303.20"/>
</dbReference>
<dbReference type="GeneID" id="105835"/>
<dbReference type="KEGG" id="mmu:105835"/>
<dbReference type="AGR" id="MGI:1916329"/>
<dbReference type="CTD" id="27352"/>
<dbReference type="MGI" id="MGI:1916329">
    <property type="gene designation" value="Sgsm3"/>
</dbReference>
<dbReference type="VEuPathDB" id="HostDB:ENSMUSG00000042303"/>
<dbReference type="eggNOG" id="KOG2222">
    <property type="taxonomic scope" value="Eukaryota"/>
</dbReference>
<dbReference type="GeneTree" id="ENSGT00940000157282"/>
<dbReference type="HOGENOM" id="CLU_020721_0_0_1"/>
<dbReference type="InParanoid" id="Q8VCZ6"/>
<dbReference type="OMA" id="EIVQKWY"/>
<dbReference type="OrthoDB" id="44736at2759"/>
<dbReference type="PhylomeDB" id="Q8VCZ6"/>
<dbReference type="BioGRID-ORCS" id="105835">
    <property type="hits" value="0 hits in 77 CRISPR screens"/>
</dbReference>
<dbReference type="ChiTaRS" id="Sgsm3">
    <property type="organism name" value="mouse"/>
</dbReference>
<dbReference type="EvolutionaryTrace" id="Q8VCZ6"/>
<dbReference type="PRO" id="PR:Q8VCZ6"/>
<dbReference type="Proteomes" id="UP000000589">
    <property type="component" value="Chromosome 15"/>
</dbReference>
<dbReference type="RNAct" id="Q8VCZ6">
    <property type="molecule type" value="protein"/>
</dbReference>
<dbReference type="Bgee" id="ENSMUSG00000042303">
    <property type="expression patterns" value="Expressed in spermatid and 176 other cell types or tissues"/>
</dbReference>
<dbReference type="ExpressionAtlas" id="Q8VCZ6">
    <property type="expression patterns" value="baseline and differential"/>
</dbReference>
<dbReference type="GO" id="GO:0005829">
    <property type="term" value="C:cytosol"/>
    <property type="evidence" value="ECO:0007669"/>
    <property type="project" value="Ensembl"/>
</dbReference>
<dbReference type="GO" id="GO:0005921">
    <property type="term" value="C:gap junction"/>
    <property type="evidence" value="ECO:0000314"/>
    <property type="project" value="UniProtKB"/>
</dbReference>
<dbReference type="GO" id="GO:0005096">
    <property type="term" value="F:GTPase activator activity"/>
    <property type="evidence" value="ECO:0000266"/>
    <property type="project" value="MGI"/>
</dbReference>
<dbReference type="GO" id="GO:0030695">
    <property type="term" value="F:GTPase regulator activity"/>
    <property type="evidence" value="ECO:0000303"/>
    <property type="project" value="UniProtKB"/>
</dbReference>
<dbReference type="GO" id="GO:0031267">
    <property type="term" value="F:small GTPase binding"/>
    <property type="evidence" value="ECO:0000250"/>
    <property type="project" value="UniProtKB"/>
</dbReference>
<dbReference type="GO" id="GO:0048227">
    <property type="term" value="P:plasma membrane to endosome transport"/>
    <property type="evidence" value="ECO:0007669"/>
    <property type="project" value="Ensembl"/>
</dbReference>
<dbReference type="GO" id="GO:0045732">
    <property type="term" value="P:positive regulation of protein catabolic process"/>
    <property type="evidence" value="ECO:0000314"/>
    <property type="project" value="UniProtKB"/>
</dbReference>
<dbReference type="GO" id="GO:0032486">
    <property type="term" value="P:Rap protein signal transduction"/>
    <property type="evidence" value="ECO:0000250"/>
    <property type="project" value="UniProtKB"/>
</dbReference>
<dbReference type="GO" id="GO:0051726">
    <property type="term" value="P:regulation of cell cycle"/>
    <property type="evidence" value="ECO:0007669"/>
    <property type="project" value="UniProtKB-KW"/>
</dbReference>
<dbReference type="GO" id="GO:0032483">
    <property type="term" value="P:regulation of Rab protein signal transduction"/>
    <property type="evidence" value="ECO:0000250"/>
    <property type="project" value="UniProtKB"/>
</dbReference>
<dbReference type="CDD" id="cd17688">
    <property type="entry name" value="RUN_SGSM3"/>
    <property type="match status" value="1"/>
</dbReference>
<dbReference type="CDD" id="cd11813">
    <property type="entry name" value="SH3_SGSM3"/>
    <property type="match status" value="1"/>
</dbReference>
<dbReference type="FunFam" id="1.10.472.80:FF:000012">
    <property type="entry name" value="Small G protein signaling modulator 3"/>
    <property type="match status" value="1"/>
</dbReference>
<dbReference type="FunFam" id="1.10.8.270:FF:000013">
    <property type="entry name" value="Small G protein signaling modulator 3"/>
    <property type="match status" value="1"/>
</dbReference>
<dbReference type="FunFam" id="2.30.30.40:FF:000115">
    <property type="entry name" value="Small G protein signaling modulator 3 homolog"/>
    <property type="match status" value="1"/>
</dbReference>
<dbReference type="Gene3D" id="1.20.58.900">
    <property type="match status" value="1"/>
</dbReference>
<dbReference type="Gene3D" id="1.10.8.270">
    <property type="entry name" value="putative rabgap domain of human tbc1 domain family member 14 like domains"/>
    <property type="match status" value="1"/>
</dbReference>
<dbReference type="Gene3D" id="2.30.30.40">
    <property type="entry name" value="SH3 Domains"/>
    <property type="match status" value="1"/>
</dbReference>
<dbReference type="Gene3D" id="1.10.472.80">
    <property type="entry name" value="Ypt/Rab-GAP domain of gyp1p, domain 3"/>
    <property type="match status" value="1"/>
</dbReference>
<dbReference type="InterPro" id="IPR000195">
    <property type="entry name" value="Rab-GAP-TBC_dom"/>
</dbReference>
<dbReference type="InterPro" id="IPR035969">
    <property type="entry name" value="Rab-GAP_TBC_sf"/>
</dbReference>
<dbReference type="InterPro" id="IPR050302">
    <property type="entry name" value="Rab_GAP_TBC_domain"/>
</dbReference>
<dbReference type="InterPro" id="IPR004012">
    <property type="entry name" value="Run_dom"/>
</dbReference>
<dbReference type="InterPro" id="IPR037213">
    <property type="entry name" value="Run_dom_sf"/>
</dbReference>
<dbReference type="InterPro" id="IPR035833">
    <property type="entry name" value="SGSM3_SH3"/>
</dbReference>
<dbReference type="InterPro" id="IPR036028">
    <property type="entry name" value="SH3-like_dom_sf"/>
</dbReference>
<dbReference type="InterPro" id="IPR001452">
    <property type="entry name" value="SH3_domain"/>
</dbReference>
<dbReference type="PANTHER" id="PTHR47219">
    <property type="entry name" value="RAB GTPASE-ACTIVATING PROTEIN 1-LIKE"/>
    <property type="match status" value="1"/>
</dbReference>
<dbReference type="PANTHER" id="PTHR47219:SF13">
    <property type="entry name" value="RUN AND TBC1 DOMAIN-CONTAINING PROTEIN 3"/>
    <property type="match status" value="1"/>
</dbReference>
<dbReference type="Pfam" id="PF00566">
    <property type="entry name" value="RabGAP-TBC"/>
    <property type="match status" value="1"/>
</dbReference>
<dbReference type="Pfam" id="PF02759">
    <property type="entry name" value="RUN"/>
    <property type="match status" value="1"/>
</dbReference>
<dbReference type="Pfam" id="PF00018">
    <property type="entry name" value="SH3_1"/>
    <property type="match status" value="1"/>
</dbReference>
<dbReference type="SMART" id="SM00593">
    <property type="entry name" value="RUN"/>
    <property type="match status" value="1"/>
</dbReference>
<dbReference type="SMART" id="SM00326">
    <property type="entry name" value="SH3"/>
    <property type="match status" value="1"/>
</dbReference>
<dbReference type="SMART" id="SM00164">
    <property type="entry name" value="TBC"/>
    <property type="match status" value="1"/>
</dbReference>
<dbReference type="SUPFAM" id="SSF140741">
    <property type="entry name" value="RUN domain-like"/>
    <property type="match status" value="1"/>
</dbReference>
<dbReference type="SUPFAM" id="SSF50044">
    <property type="entry name" value="SH3-domain"/>
    <property type="match status" value="1"/>
</dbReference>
<dbReference type="SUPFAM" id="SSF47923">
    <property type="entry name" value="Ypt/Rab-GAP domain of gyp1p"/>
    <property type="match status" value="2"/>
</dbReference>
<dbReference type="PROSITE" id="PS50826">
    <property type="entry name" value="RUN"/>
    <property type="match status" value="1"/>
</dbReference>
<dbReference type="PROSITE" id="PS50002">
    <property type="entry name" value="SH3"/>
    <property type="match status" value="1"/>
</dbReference>
<dbReference type="PROSITE" id="PS50086">
    <property type="entry name" value="TBC_RABGAP"/>
    <property type="match status" value="1"/>
</dbReference>
<sequence length="750" mass="85490">MSGNHTPSASGPFSALTPSIWPQEILAKYSQKEESSEQPELCYDEFGFRVDKEGSEPGCSQMTGSPLVEDPPQRLRWQAHLEFTHNHDVGDLTWDKIAVSLPRSEKLRSLVLAGIPHGMRPQLWMRLSGALQKKKNSELSYREIIKNSSNDETIAAKQIEKDLLRTMPSNACFANVNSIGVPRLRRVLRALAWLYPEIGYCQGTGMVAACLLLFLEEEDAFWMMCAIIEDLLPASYFSTTLLGVQTDQRVLRHLIVQYLPRLDKLLQEHDIELSLITLHWFLTAFASVVHIRLLLRIWDLFFYEGSLVLFQTTLGMLRLKEEELIQSENSASIFNTLSDIPAQMDDAELLLGEAMRLAGSLTDVAVETQRRKHLAYLIADQGQTLGTGTTTNLSQVVRRRTQRRKSGITSLLFGEDDLEALKAKNIKQTELVADLREAILRVARHFQCTDPKNCSVELTPDYSMESHQRDHENYVACLRSHRRRAKALLDFERHDDDELGFRKNDIITIISQKDEHCWVGELNGLRGWFPAKFVEVLDERSKEYSIAGDDSVTEGVTDLVRGTLCPALKALFEHGLKKPSLLGGACHPWLFIEEAAGREVERDFDSVYSRLVLCKTYRLDEDGKVLTPEELLYRAVQSVNVTHDAAHAQMDVKLRSLICVGLNEQVLHLWLEVLCSSLPTVEKWYQPWSFLRSPGWVQIKCELRVLCCFAFSLSQDWELPARREEEKQPLKEGVQDMLVKHHLFSWDIDG</sequence>
<protein>
    <recommendedName>
        <fullName>Small G protein signaling modulator 3</fullName>
    </recommendedName>
    <alternativeName>
        <fullName>RUN and TBC1 domain-containing protein 3</fullName>
    </alternativeName>
</protein>
<gene>
    <name evidence="2" type="primary">Sgsm3</name>
    <name evidence="13" type="synonym">Cip85</name>
    <name evidence="10" type="synonym">Rutbc3</name>
</gene>
<proteinExistence type="evidence at protein level"/>
<feature type="chain" id="PRO_0000307811" description="Small G protein signaling modulator 3">
    <location>
        <begin position="1"/>
        <end position="750"/>
    </location>
</feature>
<feature type="domain" description="Rab-GAP TBC" evidence="4">
    <location>
        <begin position="114"/>
        <end position="305"/>
    </location>
</feature>
<feature type="domain" description="SH3" evidence="6">
    <location>
        <begin position="480"/>
        <end position="539"/>
    </location>
</feature>
<feature type="domain" description="RUN" evidence="5">
    <location>
        <begin position="555"/>
        <end position="718"/>
    </location>
</feature>
<feature type="coiled-coil region" evidence="3">
    <location>
        <begin position="415"/>
        <end position="439"/>
    </location>
</feature>
<feature type="modified residue" description="Phosphoserine" evidence="15">
    <location>
        <position position="406"/>
    </location>
</feature>
<feature type="sequence conflict" description="In Ref. 2; BAE42041." evidence="9" ref="2">
    <original>D</original>
    <variation>G</variation>
    <location>
        <position position="622"/>
    </location>
</feature>
<feature type="strand" evidence="16">
    <location>
        <begin position="483"/>
        <end position="489"/>
    </location>
</feature>
<feature type="strand" evidence="16">
    <location>
        <begin position="506"/>
        <end position="511"/>
    </location>
</feature>
<feature type="strand" evidence="16">
    <location>
        <begin position="514"/>
        <end position="522"/>
    </location>
</feature>
<feature type="strand" evidence="16">
    <location>
        <begin position="525"/>
        <end position="530"/>
    </location>
</feature>
<feature type="helix" evidence="16">
    <location>
        <begin position="531"/>
        <end position="533"/>
    </location>
</feature>
<feature type="strand" evidence="16">
    <location>
        <begin position="534"/>
        <end position="537"/>
    </location>
</feature>
<reference evidence="9 13" key="1">
    <citation type="journal article" date="2005" name="Biochemistry">
        <title>Novel rab GAP-like protein, CIP85, interacts with connexin43 and induces its degradation.</title>
        <authorList>
            <person name="Lan Z."/>
            <person name="Kurata W.E."/>
            <person name="Martyn K.D."/>
            <person name="Jin C."/>
            <person name="Lau A.F."/>
        </authorList>
    </citation>
    <scope>NUCLEOTIDE SEQUENCE [MRNA]</scope>
    <scope>INTERACTION WITH GJA1</scope>
    <source>
        <tissue evidence="13">Embryo</tissue>
    </source>
</reference>
<reference evidence="14" key="2">
    <citation type="journal article" date="2005" name="Science">
        <title>The transcriptional landscape of the mammalian genome.</title>
        <authorList>
            <person name="Carninci P."/>
            <person name="Kasukawa T."/>
            <person name="Katayama S."/>
            <person name="Gough J."/>
            <person name="Frith M.C."/>
            <person name="Maeda N."/>
            <person name="Oyama R."/>
            <person name="Ravasi T."/>
            <person name="Lenhard B."/>
            <person name="Wells C."/>
            <person name="Kodzius R."/>
            <person name="Shimokawa K."/>
            <person name="Bajic V.B."/>
            <person name="Brenner S.E."/>
            <person name="Batalov S."/>
            <person name="Forrest A.R."/>
            <person name="Zavolan M."/>
            <person name="Davis M.J."/>
            <person name="Wilming L.G."/>
            <person name="Aidinis V."/>
            <person name="Allen J.E."/>
            <person name="Ambesi-Impiombato A."/>
            <person name="Apweiler R."/>
            <person name="Aturaliya R.N."/>
            <person name="Bailey T.L."/>
            <person name="Bansal M."/>
            <person name="Baxter L."/>
            <person name="Beisel K.W."/>
            <person name="Bersano T."/>
            <person name="Bono H."/>
            <person name="Chalk A.M."/>
            <person name="Chiu K.P."/>
            <person name="Choudhary V."/>
            <person name="Christoffels A."/>
            <person name="Clutterbuck D.R."/>
            <person name="Crowe M.L."/>
            <person name="Dalla E."/>
            <person name="Dalrymple B.P."/>
            <person name="de Bono B."/>
            <person name="Della Gatta G."/>
            <person name="di Bernardo D."/>
            <person name="Down T."/>
            <person name="Engstrom P."/>
            <person name="Fagiolini M."/>
            <person name="Faulkner G."/>
            <person name="Fletcher C.F."/>
            <person name="Fukushima T."/>
            <person name="Furuno M."/>
            <person name="Futaki S."/>
            <person name="Gariboldi M."/>
            <person name="Georgii-Hemming P."/>
            <person name="Gingeras T.R."/>
            <person name="Gojobori T."/>
            <person name="Green R.E."/>
            <person name="Gustincich S."/>
            <person name="Harbers M."/>
            <person name="Hayashi Y."/>
            <person name="Hensch T.K."/>
            <person name="Hirokawa N."/>
            <person name="Hill D."/>
            <person name="Huminiecki L."/>
            <person name="Iacono M."/>
            <person name="Ikeo K."/>
            <person name="Iwama A."/>
            <person name="Ishikawa T."/>
            <person name="Jakt M."/>
            <person name="Kanapin A."/>
            <person name="Katoh M."/>
            <person name="Kawasawa Y."/>
            <person name="Kelso J."/>
            <person name="Kitamura H."/>
            <person name="Kitano H."/>
            <person name="Kollias G."/>
            <person name="Krishnan S.P."/>
            <person name="Kruger A."/>
            <person name="Kummerfeld S.K."/>
            <person name="Kurochkin I.V."/>
            <person name="Lareau L.F."/>
            <person name="Lazarevic D."/>
            <person name="Lipovich L."/>
            <person name="Liu J."/>
            <person name="Liuni S."/>
            <person name="McWilliam S."/>
            <person name="Madan Babu M."/>
            <person name="Madera M."/>
            <person name="Marchionni L."/>
            <person name="Matsuda H."/>
            <person name="Matsuzawa S."/>
            <person name="Miki H."/>
            <person name="Mignone F."/>
            <person name="Miyake S."/>
            <person name="Morris K."/>
            <person name="Mottagui-Tabar S."/>
            <person name="Mulder N."/>
            <person name="Nakano N."/>
            <person name="Nakauchi H."/>
            <person name="Ng P."/>
            <person name="Nilsson R."/>
            <person name="Nishiguchi S."/>
            <person name="Nishikawa S."/>
            <person name="Nori F."/>
            <person name="Ohara O."/>
            <person name="Okazaki Y."/>
            <person name="Orlando V."/>
            <person name="Pang K.C."/>
            <person name="Pavan W.J."/>
            <person name="Pavesi G."/>
            <person name="Pesole G."/>
            <person name="Petrovsky N."/>
            <person name="Piazza S."/>
            <person name="Reed J."/>
            <person name="Reid J.F."/>
            <person name="Ring B.Z."/>
            <person name="Ringwald M."/>
            <person name="Rost B."/>
            <person name="Ruan Y."/>
            <person name="Salzberg S.L."/>
            <person name="Sandelin A."/>
            <person name="Schneider C."/>
            <person name="Schoenbach C."/>
            <person name="Sekiguchi K."/>
            <person name="Semple C.A."/>
            <person name="Seno S."/>
            <person name="Sessa L."/>
            <person name="Sheng Y."/>
            <person name="Shibata Y."/>
            <person name="Shimada H."/>
            <person name="Shimada K."/>
            <person name="Silva D."/>
            <person name="Sinclair B."/>
            <person name="Sperling S."/>
            <person name="Stupka E."/>
            <person name="Sugiura K."/>
            <person name="Sultana R."/>
            <person name="Takenaka Y."/>
            <person name="Taki K."/>
            <person name="Tammoja K."/>
            <person name="Tan S.L."/>
            <person name="Tang S."/>
            <person name="Taylor M.S."/>
            <person name="Tegner J."/>
            <person name="Teichmann S.A."/>
            <person name="Ueda H.R."/>
            <person name="van Nimwegen E."/>
            <person name="Verardo R."/>
            <person name="Wei C.L."/>
            <person name="Yagi K."/>
            <person name="Yamanishi H."/>
            <person name="Zabarovsky E."/>
            <person name="Zhu S."/>
            <person name="Zimmer A."/>
            <person name="Hide W."/>
            <person name="Bult C."/>
            <person name="Grimmond S.M."/>
            <person name="Teasdale R.D."/>
            <person name="Liu E.T."/>
            <person name="Brusic V."/>
            <person name="Quackenbush J."/>
            <person name="Wahlestedt C."/>
            <person name="Mattick J.S."/>
            <person name="Hume D.A."/>
            <person name="Kai C."/>
            <person name="Sasaki D."/>
            <person name="Tomaru Y."/>
            <person name="Fukuda S."/>
            <person name="Kanamori-Katayama M."/>
            <person name="Suzuki M."/>
            <person name="Aoki J."/>
            <person name="Arakawa T."/>
            <person name="Iida J."/>
            <person name="Imamura K."/>
            <person name="Itoh M."/>
            <person name="Kato T."/>
            <person name="Kawaji H."/>
            <person name="Kawagashira N."/>
            <person name="Kawashima T."/>
            <person name="Kojima M."/>
            <person name="Kondo S."/>
            <person name="Konno H."/>
            <person name="Nakano K."/>
            <person name="Ninomiya N."/>
            <person name="Nishio T."/>
            <person name="Okada M."/>
            <person name="Plessy C."/>
            <person name="Shibata K."/>
            <person name="Shiraki T."/>
            <person name="Suzuki S."/>
            <person name="Tagami M."/>
            <person name="Waki K."/>
            <person name="Watahiki A."/>
            <person name="Okamura-Oho Y."/>
            <person name="Suzuki H."/>
            <person name="Kawai J."/>
            <person name="Hayashizaki Y."/>
        </authorList>
    </citation>
    <scope>NUCLEOTIDE SEQUENCE [LARGE SCALE MRNA]</scope>
    <source>
        <strain evidence="14">NOD</strain>
        <tissue evidence="14">Dendritic cell</tissue>
    </source>
</reference>
<reference evidence="10" key="3">
    <citation type="journal article" date="2004" name="Genome Res.">
        <title>The status, quality, and expansion of the NIH full-length cDNA project: the Mammalian Gene Collection (MGC).</title>
        <authorList>
            <consortium name="The MGC Project Team"/>
        </authorList>
    </citation>
    <scope>NUCLEOTIDE SEQUENCE [LARGE SCALE MRNA]</scope>
    <source>
        <strain evidence="10">FVB/N</strain>
        <tissue evidence="11">Liver</tissue>
        <tissue evidence="12">Mammary tumor</tissue>
        <tissue evidence="10">Salivary gland</tissue>
    </source>
</reference>
<reference evidence="9" key="4">
    <citation type="journal article" date="2007" name="Genomics">
        <title>Identification of three novel proteins (SGSM1, 2, 3) which modulate small G protein (RAP and RAB)-mediated signaling pathway.</title>
        <authorList>
            <person name="Yang H."/>
            <person name="Sasaki T."/>
            <person name="Minoshima S."/>
            <person name="Shimizu N."/>
        </authorList>
    </citation>
    <scope>TISSUE SPECIFICITY</scope>
</reference>
<reference key="5">
    <citation type="journal article" date="2007" name="Proc. Natl. Acad. Sci. U.S.A.">
        <title>Large-scale phosphorylation analysis of mouse liver.</title>
        <authorList>
            <person name="Villen J."/>
            <person name="Beausoleil S.A."/>
            <person name="Gerber S.A."/>
            <person name="Gygi S.P."/>
        </authorList>
    </citation>
    <scope>IDENTIFICATION BY MASS SPECTROMETRY [LARGE SCALE ANALYSIS]</scope>
    <source>
        <tissue>Liver</tissue>
    </source>
</reference>
<reference key="6">
    <citation type="journal article" date="2010" name="Cell">
        <title>A tissue-specific atlas of mouse protein phosphorylation and expression.</title>
        <authorList>
            <person name="Huttlin E.L."/>
            <person name="Jedrychowski M.P."/>
            <person name="Elias J.E."/>
            <person name="Goswami T."/>
            <person name="Rad R."/>
            <person name="Beausoleil S.A."/>
            <person name="Villen J."/>
            <person name="Haas W."/>
            <person name="Sowa M.E."/>
            <person name="Gygi S.P."/>
        </authorList>
    </citation>
    <scope>PHOSPHORYLATION [LARGE SCALE ANALYSIS] AT SER-406</scope>
    <scope>IDENTIFICATION BY MASS SPECTROMETRY [LARGE SCALE ANALYSIS]</scope>
    <source>
        <tissue>Brain</tissue>
        <tissue>Lung</tissue>
        <tissue>Pancreas</tissue>
    </source>
</reference>
<reference key="7">
    <citation type="submission" date="2007-10" db="PDB data bank">
        <title>Solution structure of the SH3 domain of mouse RUN and TBC1 domain containing 3.</title>
        <authorList>
            <consortium name="RIKEN structural genomics initiative (RSGI)"/>
        </authorList>
    </citation>
    <scope>STRUCTURE BY NMR OF 483-549</scope>
</reference>
<evidence type="ECO:0000250" key="1"/>
<evidence type="ECO:0000250" key="2">
    <source>
        <dbReference type="UniProtKB" id="Q96HU1"/>
    </source>
</evidence>
<evidence type="ECO:0000255" key="3"/>
<evidence type="ECO:0000255" key="4">
    <source>
        <dbReference type="PROSITE-ProRule" id="PRU00163"/>
    </source>
</evidence>
<evidence type="ECO:0000255" key="5">
    <source>
        <dbReference type="PROSITE-ProRule" id="PRU00178"/>
    </source>
</evidence>
<evidence type="ECO:0000255" key="6">
    <source>
        <dbReference type="PROSITE-ProRule" id="PRU00192"/>
    </source>
</evidence>
<evidence type="ECO:0000269" key="7">
    <source>
    </source>
</evidence>
<evidence type="ECO:0000269" key="8">
    <source>
    </source>
</evidence>
<evidence type="ECO:0000305" key="9"/>
<evidence type="ECO:0000312" key="10">
    <source>
        <dbReference type="EMBL" id="AAH18197.1"/>
    </source>
</evidence>
<evidence type="ECO:0000312" key="11">
    <source>
        <dbReference type="EMBL" id="AAH24122.1"/>
    </source>
</evidence>
<evidence type="ECO:0000312" key="12">
    <source>
        <dbReference type="EMBL" id="AAH25561.1"/>
    </source>
</evidence>
<evidence type="ECO:0000312" key="13">
    <source>
        <dbReference type="EMBL" id="AAR89983.1"/>
    </source>
</evidence>
<evidence type="ECO:0000312" key="14">
    <source>
        <dbReference type="EMBL" id="BAE42041.1"/>
    </source>
</evidence>
<evidence type="ECO:0007744" key="15">
    <source>
    </source>
</evidence>
<evidence type="ECO:0007829" key="16">
    <source>
        <dbReference type="PDB" id="2YUO"/>
    </source>
</evidence>
<comment type="function">
    <text evidence="1">May play a cooperative role in NF2-mediated growth suppression of cells.</text>
</comment>
<comment type="subunit">
    <text evidence="2 7">Interacts with GJA1. Interaction with GJA1 induces its degradation. Interacts via its RUN domain with the C-terminal region of NF2. Interacts with RAB3A, RAB4A, RAB5A, RAB8A, RAB11A, RAP1A, RAP1B, RAP2A, RAP2B and PDCD6I. No interaction with RAB27A (By similarity).</text>
</comment>
<comment type="interaction">
    <interactant intactId="EBI-525155">
        <id>Q8VCZ6</id>
    </interactant>
    <interactant intactId="EBI-476947">
        <id>P08050</id>
        <label>Gja1</label>
    </interactant>
    <organismsDiffer>true</organismsDiffer>
    <experiments>4</experiments>
</comment>
<comment type="subcellular location">
    <subcellularLocation>
        <location evidence="2">Cytoplasm</location>
    </subcellularLocation>
</comment>
<comment type="tissue specificity">
    <text evidence="8">Widely expressed.</text>
</comment>
<comment type="similarity">
    <text evidence="9">Belongs to the small G protein signaling modulator family.</text>
</comment>
<comment type="sequence caution" evidence="9">
    <conflict type="erroneous initiation">
        <sequence resource="EMBL-CDS" id="BAE42041"/>
    </conflict>
</comment>
<accession>Q8VCZ6</accession>
<accession>Q3TCB6</accession>
<organism>
    <name type="scientific">Mus musculus</name>
    <name type="common">Mouse</name>
    <dbReference type="NCBI Taxonomy" id="10090"/>
    <lineage>
        <taxon>Eukaryota</taxon>
        <taxon>Metazoa</taxon>
        <taxon>Chordata</taxon>
        <taxon>Craniata</taxon>
        <taxon>Vertebrata</taxon>
        <taxon>Euteleostomi</taxon>
        <taxon>Mammalia</taxon>
        <taxon>Eutheria</taxon>
        <taxon>Euarchontoglires</taxon>
        <taxon>Glires</taxon>
        <taxon>Rodentia</taxon>
        <taxon>Myomorpha</taxon>
        <taxon>Muroidea</taxon>
        <taxon>Muridae</taxon>
        <taxon>Murinae</taxon>
        <taxon>Mus</taxon>
        <taxon>Mus</taxon>
    </lineage>
</organism>
<keyword id="KW-0002">3D-structure</keyword>
<keyword id="KW-0131">Cell cycle</keyword>
<keyword id="KW-0175">Coiled coil</keyword>
<keyword id="KW-0963">Cytoplasm</keyword>
<keyword id="KW-0338">Growth arrest</keyword>
<keyword id="KW-0597">Phosphoprotein</keyword>
<keyword id="KW-1185">Reference proteome</keyword>
<keyword id="KW-0728">SH3 domain</keyword>